<dbReference type="EC" id="3.4.21.88" evidence="1"/>
<dbReference type="EMBL" id="CP000414">
    <property type="protein sequence ID" value="ABJ62302.1"/>
    <property type="molecule type" value="Genomic_DNA"/>
</dbReference>
<dbReference type="RefSeq" id="WP_011679930.1">
    <property type="nucleotide sequence ID" value="NC_008531.1"/>
</dbReference>
<dbReference type="SMR" id="Q03WX0"/>
<dbReference type="MEROPS" id="S24.001"/>
<dbReference type="EnsemblBacteria" id="ABJ62302">
    <property type="protein sequence ID" value="ABJ62302"/>
    <property type="gene ID" value="LEUM_1204"/>
</dbReference>
<dbReference type="GeneID" id="29576458"/>
<dbReference type="KEGG" id="lme:LEUM_1204"/>
<dbReference type="eggNOG" id="COG1974">
    <property type="taxonomic scope" value="Bacteria"/>
</dbReference>
<dbReference type="HOGENOM" id="CLU_066192_45_1_9"/>
<dbReference type="Proteomes" id="UP000000362">
    <property type="component" value="Chromosome"/>
</dbReference>
<dbReference type="GO" id="GO:0003677">
    <property type="term" value="F:DNA binding"/>
    <property type="evidence" value="ECO:0007669"/>
    <property type="project" value="UniProtKB-UniRule"/>
</dbReference>
<dbReference type="GO" id="GO:0004252">
    <property type="term" value="F:serine-type endopeptidase activity"/>
    <property type="evidence" value="ECO:0007669"/>
    <property type="project" value="UniProtKB-UniRule"/>
</dbReference>
<dbReference type="GO" id="GO:0006281">
    <property type="term" value="P:DNA repair"/>
    <property type="evidence" value="ECO:0007669"/>
    <property type="project" value="UniProtKB-UniRule"/>
</dbReference>
<dbReference type="GO" id="GO:0006260">
    <property type="term" value="P:DNA replication"/>
    <property type="evidence" value="ECO:0007669"/>
    <property type="project" value="UniProtKB-UniRule"/>
</dbReference>
<dbReference type="GO" id="GO:0045892">
    <property type="term" value="P:negative regulation of DNA-templated transcription"/>
    <property type="evidence" value="ECO:0007669"/>
    <property type="project" value="UniProtKB-UniRule"/>
</dbReference>
<dbReference type="GO" id="GO:0006508">
    <property type="term" value="P:proteolysis"/>
    <property type="evidence" value="ECO:0007669"/>
    <property type="project" value="InterPro"/>
</dbReference>
<dbReference type="GO" id="GO:0009432">
    <property type="term" value="P:SOS response"/>
    <property type="evidence" value="ECO:0007669"/>
    <property type="project" value="UniProtKB-UniRule"/>
</dbReference>
<dbReference type="CDD" id="cd06529">
    <property type="entry name" value="S24_LexA-like"/>
    <property type="match status" value="1"/>
</dbReference>
<dbReference type="FunFam" id="2.10.109.10:FF:000001">
    <property type="entry name" value="LexA repressor"/>
    <property type="match status" value="1"/>
</dbReference>
<dbReference type="Gene3D" id="2.10.109.10">
    <property type="entry name" value="Umud Fragment, subunit A"/>
    <property type="match status" value="1"/>
</dbReference>
<dbReference type="Gene3D" id="1.10.10.10">
    <property type="entry name" value="Winged helix-like DNA-binding domain superfamily/Winged helix DNA-binding domain"/>
    <property type="match status" value="1"/>
</dbReference>
<dbReference type="HAMAP" id="MF_00015">
    <property type="entry name" value="LexA"/>
    <property type="match status" value="1"/>
</dbReference>
<dbReference type="InterPro" id="IPR006200">
    <property type="entry name" value="LexA"/>
</dbReference>
<dbReference type="InterPro" id="IPR039418">
    <property type="entry name" value="LexA-like"/>
</dbReference>
<dbReference type="InterPro" id="IPR036286">
    <property type="entry name" value="LexA/Signal_pep-like_sf"/>
</dbReference>
<dbReference type="InterPro" id="IPR006199">
    <property type="entry name" value="LexA_DNA-bd_dom"/>
</dbReference>
<dbReference type="InterPro" id="IPR050077">
    <property type="entry name" value="LexA_repressor"/>
</dbReference>
<dbReference type="InterPro" id="IPR006197">
    <property type="entry name" value="Peptidase_S24_LexA"/>
</dbReference>
<dbReference type="InterPro" id="IPR015927">
    <property type="entry name" value="Peptidase_S24_S26A/B/C"/>
</dbReference>
<dbReference type="InterPro" id="IPR036388">
    <property type="entry name" value="WH-like_DNA-bd_sf"/>
</dbReference>
<dbReference type="InterPro" id="IPR036390">
    <property type="entry name" value="WH_DNA-bd_sf"/>
</dbReference>
<dbReference type="NCBIfam" id="TIGR00498">
    <property type="entry name" value="lexA"/>
    <property type="match status" value="1"/>
</dbReference>
<dbReference type="PANTHER" id="PTHR33516">
    <property type="entry name" value="LEXA REPRESSOR"/>
    <property type="match status" value="1"/>
</dbReference>
<dbReference type="PANTHER" id="PTHR33516:SF2">
    <property type="entry name" value="LEXA REPRESSOR-RELATED"/>
    <property type="match status" value="1"/>
</dbReference>
<dbReference type="Pfam" id="PF01726">
    <property type="entry name" value="LexA_DNA_bind"/>
    <property type="match status" value="1"/>
</dbReference>
<dbReference type="Pfam" id="PF00717">
    <property type="entry name" value="Peptidase_S24"/>
    <property type="match status" value="1"/>
</dbReference>
<dbReference type="PRINTS" id="PR00726">
    <property type="entry name" value="LEXASERPTASE"/>
</dbReference>
<dbReference type="SUPFAM" id="SSF51306">
    <property type="entry name" value="LexA/Signal peptidase"/>
    <property type="match status" value="1"/>
</dbReference>
<dbReference type="SUPFAM" id="SSF46785">
    <property type="entry name" value="Winged helix' DNA-binding domain"/>
    <property type="match status" value="1"/>
</dbReference>
<keyword id="KW-0068">Autocatalytic cleavage</keyword>
<keyword id="KW-0227">DNA damage</keyword>
<keyword id="KW-0234">DNA repair</keyword>
<keyword id="KW-0235">DNA replication</keyword>
<keyword id="KW-0238">DNA-binding</keyword>
<keyword id="KW-0378">Hydrolase</keyword>
<keyword id="KW-1185">Reference proteome</keyword>
<keyword id="KW-0678">Repressor</keyword>
<keyword id="KW-0742">SOS response</keyword>
<keyword id="KW-0804">Transcription</keyword>
<keyword id="KW-0805">Transcription regulation</keyword>
<evidence type="ECO:0000255" key="1">
    <source>
        <dbReference type="HAMAP-Rule" id="MF_00015"/>
    </source>
</evidence>
<protein>
    <recommendedName>
        <fullName evidence="1">LexA repressor</fullName>
        <ecNumber evidence="1">3.4.21.88</ecNumber>
    </recommendedName>
</protein>
<accession>Q03WX0</accession>
<reference key="1">
    <citation type="journal article" date="2006" name="Proc. Natl. Acad. Sci. U.S.A.">
        <title>Comparative genomics of the lactic acid bacteria.</title>
        <authorList>
            <person name="Makarova K.S."/>
            <person name="Slesarev A."/>
            <person name="Wolf Y.I."/>
            <person name="Sorokin A."/>
            <person name="Mirkin B."/>
            <person name="Koonin E.V."/>
            <person name="Pavlov A."/>
            <person name="Pavlova N."/>
            <person name="Karamychev V."/>
            <person name="Polouchine N."/>
            <person name="Shakhova V."/>
            <person name="Grigoriev I."/>
            <person name="Lou Y."/>
            <person name="Rohksar D."/>
            <person name="Lucas S."/>
            <person name="Huang K."/>
            <person name="Goodstein D.M."/>
            <person name="Hawkins T."/>
            <person name="Plengvidhya V."/>
            <person name="Welker D."/>
            <person name="Hughes J."/>
            <person name="Goh Y."/>
            <person name="Benson A."/>
            <person name="Baldwin K."/>
            <person name="Lee J.-H."/>
            <person name="Diaz-Muniz I."/>
            <person name="Dosti B."/>
            <person name="Smeianov V."/>
            <person name="Wechter W."/>
            <person name="Barabote R."/>
            <person name="Lorca G."/>
            <person name="Altermann E."/>
            <person name="Barrangou R."/>
            <person name="Ganesan B."/>
            <person name="Xie Y."/>
            <person name="Rawsthorne H."/>
            <person name="Tamir D."/>
            <person name="Parker C."/>
            <person name="Breidt F."/>
            <person name="Broadbent J.R."/>
            <person name="Hutkins R."/>
            <person name="O'Sullivan D."/>
            <person name="Steele J."/>
            <person name="Unlu G."/>
            <person name="Saier M.H. Jr."/>
            <person name="Klaenhammer T."/>
            <person name="Richardson P."/>
            <person name="Kozyavkin S."/>
            <person name="Weimer B.C."/>
            <person name="Mills D.A."/>
        </authorList>
    </citation>
    <scope>NUCLEOTIDE SEQUENCE [LARGE SCALE GENOMIC DNA]</scope>
    <source>
        <strain>ATCC 8293 / DSM 20343 / BCRC 11652 / CCM 1803 / JCM 6124 / NCDO 523 / NBRC 100496 / NCIMB 8023 / NCTC 12954 / NRRL B-1118 / 37Y</strain>
    </source>
</reference>
<feature type="chain" id="PRO_1000057132" description="LexA repressor">
    <location>
        <begin position="1"/>
        <end position="212"/>
    </location>
</feature>
<feature type="DNA-binding region" description="H-T-H motif" evidence="1">
    <location>
        <begin position="29"/>
        <end position="49"/>
    </location>
</feature>
<feature type="active site" description="For autocatalytic cleavage activity" evidence="1">
    <location>
        <position position="133"/>
    </location>
</feature>
<feature type="active site" description="For autocatalytic cleavage activity" evidence="1">
    <location>
        <position position="171"/>
    </location>
</feature>
<feature type="site" description="Cleavage; by autolysis" evidence="1">
    <location>
        <begin position="96"/>
        <end position="97"/>
    </location>
</feature>
<comment type="function">
    <text evidence="1">Represses a number of genes involved in the response to DNA damage (SOS response), including recA and lexA. In the presence of single-stranded DNA, RecA interacts with LexA causing an autocatalytic cleavage which disrupts the DNA-binding part of LexA, leading to derepression of the SOS regulon and eventually DNA repair.</text>
</comment>
<comment type="catalytic activity">
    <reaction evidence="1">
        <text>Hydrolysis of Ala-|-Gly bond in repressor LexA.</text>
        <dbReference type="EC" id="3.4.21.88"/>
    </reaction>
</comment>
<comment type="subunit">
    <text evidence="1">Homodimer.</text>
</comment>
<comment type="similarity">
    <text evidence="1">Belongs to the peptidase S24 family.</text>
</comment>
<sequence length="212" mass="23361">MAITQESKQIQVLRFIHEAQSENGYPPTVREIGEAVGLSSSSTIHGHIERLVKKGYLLKDASKPRARAIEVTDIGLEMLGISTTPGKIPVLGMVTAGTPILAVEEEATEFFPIPDNLMQFDGDLFMLNVHGDSMVNIGILDGDKVIVRKQENADNGDVVVAMNDNNEATVKRFFREADHYRLQPENNSMAPIILQKVSILGKVIGLYRDAIY</sequence>
<proteinExistence type="inferred from homology"/>
<gene>
    <name evidence="1" type="primary">lexA</name>
    <name type="ordered locus">LEUM_1204</name>
</gene>
<organism>
    <name type="scientific">Leuconostoc mesenteroides subsp. mesenteroides (strain ATCC 8293 / DSM 20343 / BCRC 11652 / CCM 1803 / JCM 6124 / NCDO 523 / NBRC 100496 / NCIMB 8023 / NCTC 12954 / NRRL B-1118 / 37Y)</name>
    <dbReference type="NCBI Taxonomy" id="203120"/>
    <lineage>
        <taxon>Bacteria</taxon>
        <taxon>Bacillati</taxon>
        <taxon>Bacillota</taxon>
        <taxon>Bacilli</taxon>
        <taxon>Lactobacillales</taxon>
        <taxon>Lactobacillaceae</taxon>
        <taxon>Leuconostoc</taxon>
    </lineage>
</organism>
<name>LEXA_LEUMM</name>